<reference key="1">
    <citation type="journal article" date="2009" name="PLoS Genet.">
        <title>Organised genome dynamics in the Escherichia coli species results in highly diverse adaptive paths.</title>
        <authorList>
            <person name="Touchon M."/>
            <person name="Hoede C."/>
            <person name="Tenaillon O."/>
            <person name="Barbe V."/>
            <person name="Baeriswyl S."/>
            <person name="Bidet P."/>
            <person name="Bingen E."/>
            <person name="Bonacorsi S."/>
            <person name="Bouchier C."/>
            <person name="Bouvet O."/>
            <person name="Calteau A."/>
            <person name="Chiapello H."/>
            <person name="Clermont O."/>
            <person name="Cruveiller S."/>
            <person name="Danchin A."/>
            <person name="Diard M."/>
            <person name="Dossat C."/>
            <person name="Karoui M.E."/>
            <person name="Frapy E."/>
            <person name="Garry L."/>
            <person name="Ghigo J.M."/>
            <person name="Gilles A.M."/>
            <person name="Johnson J."/>
            <person name="Le Bouguenec C."/>
            <person name="Lescat M."/>
            <person name="Mangenot S."/>
            <person name="Martinez-Jehanne V."/>
            <person name="Matic I."/>
            <person name="Nassif X."/>
            <person name="Oztas S."/>
            <person name="Petit M.A."/>
            <person name="Pichon C."/>
            <person name="Rouy Z."/>
            <person name="Ruf C.S."/>
            <person name="Schneider D."/>
            <person name="Tourret J."/>
            <person name="Vacherie B."/>
            <person name="Vallenet D."/>
            <person name="Medigue C."/>
            <person name="Rocha E.P.C."/>
            <person name="Denamur E."/>
        </authorList>
    </citation>
    <scope>NUCLEOTIDE SEQUENCE [LARGE SCALE GENOMIC DNA]</scope>
    <source>
        <strain>IAI1</strain>
    </source>
</reference>
<feature type="chain" id="PRO_1000213061" description="NADPH-dependent 7-cyano-7-deazaguanine reductase">
    <location>
        <begin position="1"/>
        <end position="282"/>
    </location>
</feature>
<feature type="active site" description="Thioimide intermediate" evidence="1">
    <location>
        <position position="190"/>
    </location>
</feature>
<feature type="active site" description="Proton donor" evidence="1">
    <location>
        <position position="197"/>
    </location>
</feature>
<feature type="binding site" evidence="1">
    <location>
        <begin position="88"/>
        <end position="90"/>
    </location>
    <ligand>
        <name>substrate</name>
    </ligand>
</feature>
<feature type="binding site" evidence="1">
    <location>
        <begin position="90"/>
        <end position="91"/>
    </location>
    <ligand>
        <name>NADPH</name>
        <dbReference type="ChEBI" id="CHEBI:57783"/>
    </ligand>
</feature>
<feature type="binding site" evidence="1">
    <location>
        <begin position="229"/>
        <end position="230"/>
    </location>
    <ligand>
        <name>substrate</name>
    </ligand>
</feature>
<feature type="binding site" evidence="1">
    <location>
        <begin position="258"/>
        <end position="259"/>
    </location>
    <ligand>
        <name>NADPH</name>
        <dbReference type="ChEBI" id="CHEBI:57783"/>
    </ligand>
</feature>
<organism>
    <name type="scientific">Escherichia coli O8 (strain IAI1)</name>
    <dbReference type="NCBI Taxonomy" id="585034"/>
    <lineage>
        <taxon>Bacteria</taxon>
        <taxon>Pseudomonadati</taxon>
        <taxon>Pseudomonadota</taxon>
        <taxon>Gammaproteobacteria</taxon>
        <taxon>Enterobacterales</taxon>
        <taxon>Enterobacteriaceae</taxon>
        <taxon>Escherichia</taxon>
    </lineage>
</organism>
<evidence type="ECO:0000255" key="1">
    <source>
        <dbReference type="HAMAP-Rule" id="MF_00817"/>
    </source>
</evidence>
<sequence>MSSYANHQALAGLTLGKSTDYRDTYDASLLQGVPRSLNRDPLGLKADNLPFHGTDIWTLYELSWLNAKGLPQVAVGHVELDYTSVNLIESKSFKLYLNSFNQTRFNNWDEVRQTLERDLSTCAQGKVSVALYRLDELEGQPIGHFNGTCIDDQDITIDNYEFTTDYLENATSGEKVVEETLVSHLLKSNCLITHQPDWGSIQIQYRGRQIDREKLLRYLVSFRHHNEFHEQCVERIFNDLLRFCQPEKLSVYARYTRRGGLDINPWRSNSDFVPSTTRLVRQ</sequence>
<dbReference type="EC" id="1.7.1.13" evidence="1"/>
<dbReference type="EMBL" id="CU928160">
    <property type="protein sequence ID" value="CAQ99722.1"/>
    <property type="molecule type" value="Genomic_DNA"/>
</dbReference>
<dbReference type="RefSeq" id="WP_000100430.1">
    <property type="nucleotide sequence ID" value="NC_011741.1"/>
</dbReference>
<dbReference type="SMR" id="B7LXL0"/>
<dbReference type="GeneID" id="75203815"/>
<dbReference type="KEGG" id="ecr:ECIAI1_2903"/>
<dbReference type="HOGENOM" id="CLU_054738_0_0_6"/>
<dbReference type="UniPathway" id="UPA00392"/>
<dbReference type="GO" id="GO:0005737">
    <property type="term" value="C:cytoplasm"/>
    <property type="evidence" value="ECO:0007669"/>
    <property type="project" value="UniProtKB-SubCell"/>
</dbReference>
<dbReference type="GO" id="GO:0033739">
    <property type="term" value="F:preQ1 synthase activity"/>
    <property type="evidence" value="ECO:0007669"/>
    <property type="project" value="UniProtKB-UniRule"/>
</dbReference>
<dbReference type="GO" id="GO:0008616">
    <property type="term" value="P:queuosine biosynthetic process"/>
    <property type="evidence" value="ECO:0007669"/>
    <property type="project" value="UniProtKB-UniRule"/>
</dbReference>
<dbReference type="GO" id="GO:0006400">
    <property type="term" value="P:tRNA modification"/>
    <property type="evidence" value="ECO:0007669"/>
    <property type="project" value="UniProtKB-UniRule"/>
</dbReference>
<dbReference type="FunFam" id="3.30.1130.10:FF:000004">
    <property type="entry name" value="NADPH-dependent 7-cyano-7-deazaguanine reductase"/>
    <property type="match status" value="1"/>
</dbReference>
<dbReference type="FunFam" id="3.30.1130.10:FF:000006">
    <property type="entry name" value="NADPH-dependent 7-cyano-7-deazaguanine reductase"/>
    <property type="match status" value="1"/>
</dbReference>
<dbReference type="Gene3D" id="3.30.1130.10">
    <property type="match status" value="2"/>
</dbReference>
<dbReference type="HAMAP" id="MF_00817">
    <property type="entry name" value="QueF_type2"/>
    <property type="match status" value="1"/>
</dbReference>
<dbReference type="InterPro" id="IPR043133">
    <property type="entry name" value="GTP-CH-I_C/QueF"/>
</dbReference>
<dbReference type="InterPro" id="IPR050084">
    <property type="entry name" value="NADPH_dep_7-cyano-7-deazaG_red"/>
</dbReference>
<dbReference type="InterPro" id="IPR029500">
    <property type="entry name" value="QueF"/>
</dbReference>
<dbReference type="InterPro" id="IPR029139">
    <property type="entry name" value="QueF_N"/>
</dbReference>
<dbReference type="InterPro" id="IPR016428">
    <property type="entry name" value="QueF_type2"/>
</dbReference>
<dbReference type="NCBIfam" id="TIGR03138">
    <property type="entry name" value="QueF"/>
    <property type="match status" value="1"/>
</dbReference>
<dbReference type="PANTHER" id="PTHR34354">
    <property type="entry name" value="NADPH-DEPENDENT 7-CYANO-7-DEAZAGUANINE REDUCTASE"/>
    <property type="match status" value="1"/>
</dbReference>
<dbReference type="PANTHER" id="PTHR34354:SF1">
    <property type="entry name" value="NADPH-DEPENDENT 7-CYANO-7-DEAZAGUANINE REDUCTASE"/>
    <property type="match status" value="1"/>
</dbReference>
<dbReference type="Pfam" id="PF14489">
    <property type="entry name" value="QueF"/>
    <property type="match status" value="1"/>
</dbReference>
<dbReference type="Pfam" id="PF14819">
    <property type="entry name" value="QueF_N"/>
    <property type="match status" value="1"/>
</dbReference>
<dbReference type="PIRSF" id="PIRSF004750">
    <property type="entry name" value="Nitrile_oxidored_YqcD_prd"/>
    <property type="match status" value="1"/>
</dbReference>
<dbReference type="SUPFAM" id="SSF55620">
    <property type="entry name" value="Tetrahydrobiopterin biosynthesis enzymes-like"/>
    <property type="match status" value="1"/>
</dbReference>
<proteinExistence type="inferred from homology"/>
<name>QUEF_ECO8A</name>
<protein>
    <recommendedName>
        <fullName evidence="1">NADPH-dependent 7-cyano-7-deazaguanine reductase</fullName>
        <ecNumber evidence="1">1.7.1.13</ecNumber>
    </recommendedName>
    <alternativeName>
        <fullName evidence="1">7-cyano-7-carbaguanine reductase</fullName>
    </alternativeName>
    <alternativeName>
        <fullName evidence="1">NADPH-dependent nitrile oxidoreductase</fullName>
    </alternativeName>
    <alternativeName>
        <fullName evidence="1">PreQ(0) reductase</fullName>
    </alternativeName>
</protein>
<accession>B7LXL0</accession>
<keyword id="KW-0963">Cytoplasm</keyword>
<keyword id="KW-0521">NADP</keyword>
<keyword id="KW-0560">Oxidoreductase</keyword>
<keyword id="KW-0671">Queuosine biosynthesis</keyword>
<comment type="function">
    <text evidence="1">Catalyzes the NADPH-dependent reduction of 7-cyano-7-deazaguanine (preQ0) to 7-aminomethyl-7-deazaguanine (preQ1).</text>
</comment>
<comment type="catalytic activity">
    <reaction evidence="1">
        <text>7-aminomethyl-7-carbaguanine + 2 NADP(+) = 7-cyano-7-deazaguanine + 2 NADPH + 3 H(+)</text>
        <dbReference type="Rhea" id="RHEA:13409"/>
        <dbReference type="ChEBI" id="CHEBI:15378"/>
        <dbReference type="ChEBI" id="CHEBI:45075"/>
        <dbReference type="ChEBI" id="CHEBI:57783"/>
        <dbReference type="ChEBI" id="CHEBI:58349"/>
        <dbReference type="ChEBI" id="CHEBI:58703"/>
        <dbReference type="EC" id="1.7.1.13"/>
    </reaction>
</comment>
<comment type="pathway">
    <text evidence="1">tRNA modification; tRNA-queuosine biosynthesis.</text>
</comment>
<comment type="subunit">
    <text evidence="1">Homodimer.</text>
</comment>
<comment type="subcellular location">
    <subcellularLocation>
        <location evidence="1">Cytoplasm</location>
    </subcellularLocation>
</comment>
<comment type="similarity">
    <text evidence="1">Belongs to the GTP cyclohydrolase I family. QueF type 2 subfamily.</text>
</comment>
<gene>
    <name evidence="1" type="primary">queF</name>
    <name type="ordered locus">ECIAI1_2903</name>
</gene>